<organism>
    <name type="scientific">Yersinia pestis bv. Antiqua (strain Antiqua)</name>
    <dbReference type="NCBI Taxonomy" id="360102"/>
    <lineage>
        <taxon>Bacteria</taxon>
        <taxon>Pseudomonadati</taxon>
        <taxon>Pseudomonadota</taxon>
        <taxon>Gammaproteobacteria</taxon>
        <taxon>Enterobacterales</taxon>
        <taxon>Yersiniaceae</taxon>
        <taxon>Yersinia</taxon>
    </lineage>
</organism>
<proteinExistence type="inferred from homology"/>
<feature type="chain" id="PRO_0000272579" description="Phosphate import ATP-binding protein PstB 2">
    <location>
        <begin position="1"/>
        <end position="258"/>
    </location>
</feature>
<feature type="domain" description="ABC transporter" evidence="1">
    <location>
        <begin position="12"/>
        <end position="253"/>
    </location>
</feature>
<feature type="binding site" evidence="1">
    <location>
        <begin position="44"/>
        <end position="51"/>
    </location>
    <ligand>
        <name>ATP</name>
        <dbReference type="ChEBI" id="CHEBI:30616"/>
    </ligand>
</feature>
<gene>
    <name evidence="1" type="primary">pstB2</name>
    <name type="ordered locus">YPA_4159</name>
</gene>
<name>PSTB2_YERPA</name>
<comment type="function">
    <text evidence="1">Part of the ABC transporter complex PstSACB involved in phosphate import. Responsible for energy coupling to the transport system.</text>
</comment>
<comment type="catalytic activity">
    <reaction evidence="1">
        <text>phosphate(out) + ATP + H2O = ADP + 2 phosphate(in) + H(+)</text>
        <dbReference type="Rhea" id="RHEA:24440"/>
        <dbReference type="ChEBI" id="CHEBI:15377"/>
        <dbReference type="ChEBI" id="CHEBI:15378"/>
        <dbReference type="ChEBI" id="CHEBI:30616"/>
        <dbReference type="ChEBI" id="CHEBI:43474"/>
        <dbReference type="ChEBI" id="CHEBI:456216"/>
        <dbReference type="EC" id="7.3.2.1"/>
    </reaction>
</comment>
<comment type="subunit">
    <text evidence="1">The complex is composed of two ATP-binding proteins (PstB), two transmembrane proteins (PstC and PstA) and a solute-binding protein (PstS).</text>
</comment>
<comment type="subcellular location">
    <subcellularLocation>
        <location evidence="1">Cell inner membrane</location>
        <topology evidence="1">Peripheral membrane protein</topology>
    </subcellularLocation>
</comment>
<comment type="similarity">
    <text evidence="1">Belongs to the ABC transporter superfamily. Phosphate importer (TC 3.A.1.7) family.</text>
</comment>
<keyword id="KW-0067">ATP-binding</keyword>
<keyword id="KW-0997">Cell inner membrane</keyword>
<keyword id="KW-1003">Cell membrane</keyword>
<keyword id="KW-0472">Membrane</keyword>
<keyword id="KW-0547">Nucleotide-binding</keyword>
<keyword id="KW-0592">Phosphate transport</keyword>
<keyword id="KW-1278">Translocase</keyword>
<keyword id="KW-0813">Transport</keyword>
<evidence type="ECO:0000255" key="1">
    <source>
        <dbReference type="HAMAP-Rule" id="MF_01702"/>
    </source>
</evidence>
<dbReference type="EC" id="7.3.2.1" evidence="1"/>
<dbReference type="EMBL" id="CP000308">
    <property type="protein sequence ID" value="ABG16120.1"/>
    <property type="molecule type" value="Genomic_DNA"/>
</dbReference>
<dbReference type="SMR" id="Q1C0A2"/>
<dbReference type="KEGG" id="ypa:YPA_4159"/>
<dbReference type="Proteomes" id="UP000001971">
    <property type="component" value="Chromosome"/>
</dbReference>
<dbReference type="GO" id="GO:0005886">
    <property type="term" value="C:plasma membrane"/>
    <property type="evidence" value="ECO:0007669"/>
    <property type="project" value="UniProtKB-SubCell"/>
</dbReference>
<dbReference type="GO" id="GO:0005524">
    <property type="term" value="F:ATP binding"/>
    <property type="evidence" value="ECO:0007669"/>
    <property type="project" value="UniProtKB-KW"/>
</dbReference>
<dbReference type="GO" id="GO:0016887">
    <property type="term" value="F:ATP hydrolysis activity"/>
    <property type="evidence" value="ECO:0007669"/>
    <property type="project" value="InterPro"/>
</dbReference>
<dbReference type="GO" id="GO:0015415">
    <property type="term" value="F:ATPase-coupled phosphate ion transmembrane transporter activity"/>
    <property type="evidence" value="ECO:0007669"/>
    <property type="project" value="UniProtKB-EC"/>
</dbReference>
<dbReference type="GO" id="GO:0035435">
    <property type="term" value="P:phosphate ion transmembrane transport"/>
    <property type="evidence" value="ECO:0007669"/>
    <property type="project" value="InterPro"/>
</dbReference>
<dbReference type="CDD" id="cd03260">
    <property type="entry name" value="ABC_PstB_phosphate_transporter"/>
    <property type="match status" value="1"/>
</dbReference>
<dbReference type="FunFam" id="3.40.50.300:FF:000132">
    <property type="entry name" value="Phosphate import ATP-binding protein PstB"/>
    <property type="match status" value="1"/>
</dbReference>
<dbReference type="Gene3D" id="3.40.50.300">
    <property type="entry name" value="P-loop containing nucleotide triphosphate hydrolases"/>
    <property type="match status" value="1"/>
</dbReference>
<dbReference type="InterPro" id="IPR003593">
    <property type="entry name" value="AAA+_ATPase"/>
</dbReference>
<dbReference type="InterPro" id="IPR003439">
    <property type="entry name" value="ABC_transporter-like_ATP-bd"/>
</dbReference>
<dbReference type="InterPro" id="IPR017871">
    <property type="entry name" value="ABC_transporter-like_CS"/>
</dbReference>
<dbReference type="InterPro" id="IPR027417">
    <property type="entry name" value="P-loop_NTPase"/>
</dbReference>
<dbReference type="InterPro" id="IPR005670">
    <property type="entry name" value="PstB-like"/>
</dbReference>
<dbReference type="NCBIfam" id="TIGR00972">
    <property type="entry name" value="3a0107s01c2"/>
    <property type="match status" value="1"/>
</dbReference>
<dbReference type="PANTHER" id="PTHR43423">
    <property type="entry name" value="ABC TRANSPORTER I FAMILY MEMBER 17"/>
    <property type="match status" value="1"/>
</dbReference>
<dbReference type="PANTHER" id="PTHR43423:SF3">
    <property type="entry name" value="PHOSPHATE IMPORT ATP-BINDING PROTEIN PSTB"/>
    <property type="match status" value="1"/>
</dbReference>
<dbReference type="Pfam" id="PF00005">
    <property type="entry name" value="ABC_tran"/>
    <property type="match status" value="1"/>
</dbReference>
<dbReference type="SMART" id="SM00382">
    <property type="entry name" value="AAA"/>
    <property type="match status" value="1"/>
</dbReference>
<dbReference type="SUPFAM" id="SSF52540">
    <property type="entry name" value="P-loop containing nucleoside triphosphate hydrolases"/>
    <property type="match status" value="1"/>
</dbReference>
<dbReference type="PROSITE" id="PS00211">
    <property type="entry name" value="ABC_TRANSPORTER_1"/>
    <property type="match status" value="1"/>
</dbReference>
<dbReference type="PROSITE" id="PS50893">
    <property type="entry name" value="ABC_TRANSPORTER_2"/>
    <property type="match status" value="1"/>
</dbReference>
<dbReference type="PROSITE" id="PS51238">
    <property type="entry name" value="PSTB"/>
    <property type="match status" value="1"/>
</dbReference>
<reference key="1">
    <citation type="journal article" date="2006" name="J. Bacteriol.">
        <title>Complete genome sequence of Yersinia pestis strains Antiqua and Nepal516: evidence of gene reduction in an emerging pathogen.</title>
        <authorList>
            <person name="Chain P.S.G."/>
            <person name="Hu P."/>
            <person name="Malfatti S.A."/>
            <person name="Radnedge L."/>
            <person name="Larimer F."/>
            <person name="Vergez L.M."/>
            <person name="Worsham P."/>
            <person name="Chu M.C."/>
            <person name="Andersen G.L."/>
        </authorList>
    </citation>
    <scope>NUCLEOTIDE SEQUENCE [LARGE SCALE GENOMIC DNA]</scope>
    <source>
        <strain>Antiqua</strain>
    </source>
</reference>
<protein>
    <recommendedName>
        <fullName evidence="1">Phosphate import ATP-binding protein PstB 2</fullName>
        <ecNumber evidence="1">7.3.2.1</ecNumber>
    </recommendedName>
    <alternativeName>
        <fullName evidence="1">ABC phosphate transporter 2</fullName>
    </alternativeName>
    <alternativeName>
        <fullName evidence="1">Phosphate-transporting ATPase 2</fullName>
    </alternativeName>
</protein>
<accession>Q1C0A2</accession>
<sequence length="258" mass="29040">MSMATDVTNSKIQVRDLNFYYGKFHALKNISLDIAKNQVTAFIGPSGCGKSTLLRTFNKMYQLYPEQRAEGDILLDGQNILTDKQDIALLRAKVGMVFQKPTPFPMSIYDNIAFGVKLFESLSRADMDERVQWALTKAALWNETKDKLHQSGYSLSGGQQQRLCIARGIAIRPDVLLLDEPCSALDPISTGRIEELISELKSDYTVVIVTHNMQQAARCSDHTAFMYLGELIEFSDTDTLFTTPQQKQTEDYITGRYG</sequence>